<evidence type="ECO:0000255" key="1">
    <source>
        <dbReference type="HAMAP-Rule" id="MF_00127"/>
    </source>
</evidence>
<sequence>MVQRPRGTRDFLPDEMEARRMIEGRMREAVRRWGYREVATPIFEDLSLFTMRSGQGIIDEMYVFQDKGGRDLALRPELTAAVLRMYVNEARVLAKPLRWCYFADCFRYERPQKGRYRQFWQFGVELIGADTAAADAEVILVADNAIRSSGLDYDLKIGHLGLMKHLLADVGEEVRRKVMAYLDKKEFDGLKDYLETAGLAALTDPLTRLLAAETLDEAFAVTGPLPEEGRIREMAALLDATGVRYSYNFGIARGLDYYTGMVFEGFAKNLGAESQIVGGGAYRLAQVFGGDDAPSVGFAIGFDRVMVALGEVQTRKQKIVGVVSTAEGRPFAFRVANAFRTAGIRADLDLSDRGLGAQLARAAKEADFAVLIGEREVATGTVTLKNLATGTQTAVTIDLAVRTVIDGSR</sequence>
<dbReference type="EC" id="6.1.1.21" evidence="1"/>
<dbReference type="EMBL" id="CP001338">
    <property type="protein sequence ID" value="ACL17494.1"/>
    <property type="molecule type" value="Genomic_DNA"/>
</dbReference>
<dbReference type="RefSeq" id="WP_012618813.1">
    <property type="nucleotide sequence ID" value="NC_011832.1"/>
</dbReference>
<dbReference type="SMR" id="B8GDZ3"/>
<dbReference type="STRING" id="521011.Mpal_2198"/>
<dbReference type="GeneID" id="7270283"/>
<dbReference type="KEGG" id="mpl:Mpal_2198"/>
<dbReference type="eggNOG" id="arCOG00404">
    <property type="taxonomic scope" value="Archaea"/>
</dbReference>
<dbReference type="HOGENOM" id="CLU_025113_3_1_2"/>
<dbReference type="OrthoDB" id="8659at2157"/>
<dbReference type="Proteomes" id="UP000002457">
    <property type="component" value="Chromosome"/>
</dbReference>
<dbReference type="GO" id="GO:0005737">
    <property type="term" value="C:cytoplasm"/>
    <property type="evidence" value="ECO:0007669"/>
    <property type="project" value="UniProtKB-SubCell"/>
</dbReference>
<dbReference type="GO" id="GO:0005524">
    <property type="term" value="F:ATP binding"/>
    <property type="evidence" value="ECO:0007669"/>
    <property type="project" value="UniProtKB-UniRule"/>
</dbReference>
<dbReference type="GO" id="GO:0004821">
    <property type="term" value="F:histidine-tRNA ligase activity"/>
    <property type="evidence" value="ECO:0007669"/>
    <property type="project" value="UniProtKB-UniRule"/>
</dbReference>
<dbReference type="GO" id="GO:0006427">
    <property type="term" value="P:histidyl-tRNA aminoacylation"/>
    <property type="evidence" value="ECO:0007669"/>
    <property type="project" value="UniProtKB-UniRule"/>
</dbReference>
<dbReference type="GO" id="GO:0000105">
    <property type="term" value="P:L-histidine biosynthetic process"/>
    <property type="evidence" value="ECO:0007669"/>
    <property type="project" value="InterPro"/>
</dbReference>
<dbReference type="CDD" id="cd00773">
    <property type="entry name" value="HisRS-like_core"/>
    <property type="match status" value="1"/>
</dbReference>
<dbReference type="Gene3D" id="3.40.50.800">
    <property type="entry name" value="Anticodon-binding domain"/>
    <property type="match status" value="1"/>
</dbReference>
<dbReference type="Gene3D" id="3.30.930.10">
    <property type="entry name" value="Bira Bifunctional Protein, Domain 2"/>
    <property type="match status" value="1"/>
</dbReference>
<dbReference type="HAMAP" id="MF_00127">
    <property type="entry name" value="His_tRNA_synth"/>
    <property type="match status" value="1"/>
</dbReference>
<dbReference type="HAMAP" id="MF_00125">
    <property type="entry name" value="HisZ"/>
    <property type="match status" value="1"/>
</dbReference>
<dbReference type="InterPro" id="IPR006195">
    <property type="entry name" value="aa-tRNA-synth_II"/>
</dbReference>
<dbReference type="InterPro" id="IPR045864">
    <property type="entry name" value="aa-tRNA-synth_II/BPL/LPL"/>
</dbReference>
<dbReference type="InterPro" id="IPR004154">
    <property type="entry name" value="Anticodon-bd"/>
</dbReference>
<dbReference type="InterPro" id="IPR036621">
    <property type="entry name" value="Anticodon-bd_dom_sf"/>
</dbReference>
<dbReference type="InterPro" id="IPR015807">
    <property type="entry name" value="His-tRNA-ligase"/>
</dbReference>
<dbReference type="InterPro" id="IPR041715">
    <property type="entry name" value="HisRS-like_core"/>
</dbReference>
<dbReference type="InterPro" id="IPR004516">
    <property type="entry name" value="HisRS/HisZ"/>
</dbReference>
<dbReference type="InterPro" id="IPR004517">
    <property type="entry name" value="HisZ"/>
</dbReference>
<dbReference type="NCBIfam" id="TIGR00442">
    <property type="entry name" value="hisS"/>
    <property type="match status" value="1"/>
</dbReference>
<dbReference type="PANTHER" id="PTHR43707:SF1">
    <property type="entry name" value="HISTIDINE--TRNA LIGASE, MITOCHONDRIAL-RELATED"/>
    <property type="match status" value="1"/>
</dbReference>
<dbReference type="PANTHER" id="PTHR43707">
    <property type="entry name" value="HISTIDYL-TRNA SYNTHETASE"/>
    <property type="match status" value="1"/>
</dbReference>
<dbReference type="Pfam" id="PF03129">
    <property type="entry name" value="HGTP_anticodon"/>
    <property type="match status" value="1"/>
</dbReference>
<dbReference type="Pfam" id="PF13393">
    <property type="entry name" value="tRNA-synt_His"/>
    <property type="match status" value="1"/>
</dbReference>
<dbReference type="PIRSF" id="PIRSF001549">
    <property type="entry name" value="His-tRNA_synth"/>
    <property type="match status" value="1"/>
</dbReference>
<dbReference type="SUPFAM" id="SSF52954">
    <property type="entry name" value="Class II aaRS ABD-related"/>
    <property type="match status" value="1"/>
</dbReference>
<dbReference type="SUPFAM" id="SSF55681">
    <property type="entry name" value="Class II aaRS and biotin synthetases"/>
    <property type="match status" value="1"/>
</dbReference>
<dbReference type="PROSITE" id="PS50862">
    <property type="entry name" value="AA_TRNA_LIGASE_II"/>
    <property type="match status" value="1"/>
</dbReference>
<name>SYH_METPE</name>
<reference key="1">
    <citation type="journal article" date="2015" name="Genome Announc.">
        <title>Complete Genome Sequence of Methanosphaerula palustris E1-9CT, a Hydrogenotrophic Methanogen Isolated from a Minerotrophic Fen Peatland.</title>
        <authorList>
            <person name="Cadillo-Quiroz H."/>
            <person name="Browne P."/>
            <person name="Kyrpides N."/>
            <person name="Woyke T."/>
            <person name="Goodwin L."/>
            <person name="Detter C."/>
            <person name="Yavitt J.B."/>
            <person name="Zinder S.H."/>
        </authorList>
    </citation>
    <scope>NUCLEOTIDE SEQUENCE [LARGE SCALE GENOMIC DNA]</scope>
    <source>
        <strain>ATCC BAA-1556 / DSM 19958 / E1-9c</strain>
    </source>
</reference>
<proteinExistence type="inferred from homology"/>
<gene>
    <name evidence="1" type="primary">hisS</name>
    <name type="ordered locus">Mpal_2198</name>
</gene>
<keyword id="KW-0030">Aminoacyl-tRNA synthetase</keyword>
<keyword id="KW-0067">ATP-binding</keyword>
<keyword id="KW-0963">Cytoplasm</keyword>
<keyword id="KW-0436">Ligase</keyword>
<keyword id="KW-0547">Nucleotide-binding</keyword>
<keyword id="KW-0648">Protein biosynthesis</keyword>
<keyword id="KW-1185">Reference proteome</keyword>
<accession>B8GDZ3</accession>
<comment type="catalytic activity">
    <reaction evidence="1">
        <text>tRNA(His) + L-histidine + ATP = L-histidyl-tRNA(His) + AMP + diphosphate + H(+)</text>
        <dbReference type="Rhea" id="RHEA:17313"/>
        <dbReference type="Rhea" id="RHEA-COMP:9665"/>
        <dbReference type="Rhea" id="RHEA-COMP:9689"/>
        <dbReference type="ChEBI" id="CHEBI:15378"/>
        <dbReference type="ChEBI" id="CHEBI:30616"/>
        <dbReference type="ChEBI" id="CHEBI:33019"/>
        <dbReference type="ChEBI" id="CHEBI:57595"/>
        <dbReference type="ChEBI" id="CHEBI:78442"/>
        <dbReference type="ChEBI" id="CHEBI:78527"/>
        <dbReference type="ChEBI" id="CHEBI:456215"/>
        <dbReference type="EC" id="6.1.1.21"/>
    </reaction>
</comment>
<comment type="subcellular location">
    <subcellularLocation>
        <location evidence="1">Cytoplasm</location>
    </subcellularLocation>
</comment>
<comment type="similarity">
    <text evidence="1">Belongs to the class-II aminoacyl-tRNA synthetase family.</text>
</comment>
<feature type="chain" id="PRO_1000199168" description="Histidine--tRNA ligase">
    <location>
        <begin position="1"/>
        <end position="409"/>
    </location>
</feature>
<protein>
    <recommendedName>
        <fullName evidence="1">Histidine--tRNA ligase</fullName>
        <ecNumber evidence="1">6.1.1.21</ecNumber>
    </recommendedName>
    <alternativeName>
        <fullName evidence="1">Histidyl-tRNA synthetase</fullName>
        <shortName evidence="1">HisRS</shortName>
    </alternativeName>
</protein>
<organism>
    <name type="scientific">Methanosphaerula palustris (strain ATCC BAA-1556 / DSM 19958 / E1-9c)</name>
    <dbReference type="NCBI Taxonomy" id="521011"/>
    <lineage>
        <taxon>Archaea</taxon>
        <taxon>Methanobacteriati</taxon>
        <taxon>Methanobacteriota</taxon>
        <taxon>Stenosarchaea group</taxon>
        <taxon>Methanomicrobia</taxon>
        <taxon>Methanomicrobiales</taxon>
        <taxon>Methanoregulaceae</taxon>
        <taxon>Methanosphaerula</taxon>
    </lineage>
</organism>